<comment type="function">
    <text evidence="2">Functions in the bile acid 7alpha-dehydroxylation pathway, which forms secondary bile acids via the 7alpha-dehydroxylation of primary bile acids, and is carried out by intestinal anaerobic bacteria. Catalyzes the dehydration step in this pathway, yielding a 3-oxo-Delta(4,6)-bile acid-CoA intermediate. In vitro, can act on the free bile acids (non CoA-conjugated) 7-alpha,12-alpha-dihydroxy-3-oxochol-4-enoate and 7-alpha-hydroxy-3-oxochol-4-enoate, but not on 7-alpha,12-alpha-dihydroxy-3-oxo-5-beta-cholanate, 3-alpha,7-alpha,12-alpha-trihydroxy-5-beta-cholanate or 7-beta-hydroxy-3-oxochol-4-enoate.</text>
</comment>
<comment type="catalytic activity">
    <reaction evidence="6">
        <text>7alpha,12alpha-dihydroxy-3-oxochol-4-en-24-oyl-CoA = 12alpha-hydroxy-3-oxochola-4,6-dien-24-oyl-CoA + H2O</text>
        <dbReference type="Rhea" id="RHEA:10436"/>
        <dbReference type="ChEBI" id="CHEBI:15377"/>
        <dbReference type="ChEBI" id="CHEBI:132977"/>
        <dbReference type="ChEBI" id="CHEBI:132978"/>
        <dbReference type="EC" id="4.2.1.106"/>
    </reaction>
    <physiologicalReaction direction="left-to-right" evidence="6">
        <dbReference type="Rhea" id="RHEA:10437"/>
    </physiologicalReaction>
</comment>
<comment type="catalytic activity">
    <reaction evidence="6">
        <text>7alpha-hydroxy-3-oxochol-4-en-24-oyl-CoA = 3-oxochol-4,6-dien-24-oyl-CoA + H2O</text>
        <dbReference type="Rhea" id="RHEA:65348"/>
        <dbReference type="ChEBI" id="CHEBI:15377"/>
        <dbReference type="ChEBI" id="CHEBI:140634"/>
        <dbReference type="ChEBI" id="CHEBI:140636"/>
    </reaction>
    <physiologicalReaction direction="left-to-right" evidence="6">
        <dbReference type="Rhea" id="RHEA:65349"/>
    </physiologicalReaction>
</comment>
<comment type="catalytic activity">
    <reaction evidence="2">
        <text>7alpha,12alpha-dihydroxy-3-oxochol-4-en-24-oate = 12alpha-hydroxy-3-oxochola-4,6-dien-24-oate + H2O</text>
        <dbReference type="Rhea" id="RHEA:65352"/>
        <dbReference type="ChEBI" id="CHEBI:15377"/>
        <dbReference type="ChEBI" id="CHEBI:58803"/>
        <dbReference type="ChEBI" id="CHEBI:58804"/>
    </reaction>
    <physiologicalReaction direction="left-to-right" evidence="6">
        <dbReference type="Rhea" id="RHEA:65353"/>
    </physiologicalReaction>
</comment>
<comment type="catalytic activity">
    <reaction evidence="2">
        <text>7alpha-hydroxy-3-oxochol-4-en-24-oate = 3-oxochola-4,6-dien-24-oate + H2O</text>
        <dbReference type="Rhea" id="RHEA:47548"/>
        <dbReference type="ChEBI" id="CHEBI:15377"/>
        <dbReference type="ChEBI" id="CHEBI:87747"/>
        <dbReference type="ChEBI" id="CHEBI:87748"/>
    </reaction>
    <physiologicalReaction direction="left-to-right" evidence="6">
        <dbReference type="Rhea" id="RHEA:47549"/>
    </physiologicalReaction>
</comment>
<comment type="biophysicochemical properties">
    <kinetics>
        <KM evidence="2">0.16 mM for 7-alpha,12-alpha-dihydroxy-3-oxochol-4-enoate</KM>
        <Vmax evidence="2">0.48 mmol/min/mg enzyme with 7-alpha,12-alpha-dihydroxy-3-oxochol-4-enoate as substrate</Vmax>
    </kinetics>
</comment>
<comment type="pathway">
    <text evidence="6">Lipid metabolism; bile acid biosynthesis.</text>
</comment>
<comment type="subunit">
    <text evidence="2">Homodimer.</text>
</comment>
<comment type="induction">
    <text evidence="1">Induced by bile acids such as cholate.</text>
</comment>
<organism>
    <name type="scientific">Clostridium scindens (strain JCM 10418 / VPI 12708)</name>
    <dbReference type="NCBI Taxonomy" id="29347"/>
    <lineage>
        <taxon>Bacteria</taxon>
        <taxon>Bacillati</taxon>
        <taxon>Bacillota</taxon>
        <taxon>Clostridia</taxon>
        <taxon>Lachnospirales</taxon>
        <taxon>Lachnospiraceae</taxon>
    </lineage>
</organism>
<feature type="chain" id="PRO_0000064812" description="Bile acid 7alpha-dehydratase">
    <location>
        <begin position="1"/>
        <end position="166"/>
    </location>
</feature>
<feature type="sequence conflict" description="In Ref. 1; AA sequence." evidence="5" ref="1">
    <original>T</original>
    <variation>F</variation>
    <location>
        <position position="2"/>
    </location>
</feature>
<evidence type="ECO:0000269" key="1">
    <source>
    </source>
</evidence>
<evidence type="ECO:0000269" key="2">
    <source>
    </source>
</evidence>
<evidence type="ECO:0000303" key="3">
    <source>
    </source>
</evidence>
<evidence type="ECO:0000303" key="4">
    <source>
    </source>
</evidence>
<evidence type="ECO:0000305" key="5"/>
<evidence type="ECO:0000305" key="6">
    <source>
    </source>
</evidence>
<reference key="1">
    <citation type="journal article" date="1990" name="J. Bacteriol.">
        <title>Cloning and sequencing of a bile acid-inducible operon from Eubacterium sp. strain VPI 12708.</title>
        <authorList>
            <person name="Mallonee D.H."/>
            <person name="White W.B."/>
            <person name="Hylemon P.B."/>
        </authorList>
    </citation>
    <scope>NUCLEOTIDE SEQUENCE [GENOMIC DNA]</scope>
    <scope>PROTEIN SEQUENCE OF 1-31</scope>
    <scope>INDUCTION</scope>
    <source>
        <strain>JCM 10418 /VPI 12708</strain>
    </source>
</reference>
<reference key="2">
    <citation type="journal article" date="1996" name="J. Lipid Res.">
        <title>Expression and characterization of a C24 bile acid 7 alpha-dehydratase from Eubacterium sp. strain VPI 12708 in Escherichia coli.</title>
        <authorList>
            <person name="Dawson J.A."/>
            <person name="Mallonee D.H."/>
            <person name="Bjorkhem I."/>
            <person name="Hylemon P.B."/>
        </authorList>
    </citation>
    <scope>FUNCTION</scope>
    <scope>CATALYTIC ACTIVITY</scope>
    <scope>SUBUNIT</scope>
    <scope>BIOPHYSICOCHEMICAL PROPERTIES</scope>
    <scope>SUBSTRATE SPECIFICITY</scope>
    <source>
        <strain>JCM 10418 /VPI 12708</strain>
    </source>
</reference>
<sequence length="166" mass="19533">MTLEERVEALEKELQEMKDIEAIKELKGKYFRCLDGKMWDELETTLSPNIVTSYSNGKLVFHSPKEVTDYLKSSMPKEEISMHMGHTPEITIDSETTATGRWYLEDRLIFTDGKYKDVGINGGAFYTDKYEKIDGQWYILETGYVRIYEEHFMRDPKIHITMNMHK</sequence>
<dbReference type="EC" id="4.2.1.106" evidence="2"/>
<dbReference type="EMBL" id="U57489">
    <property type="protein sequence ID" value="AAC45413.1"/>
    <property type="molecule type" value="Genomic_DNA"/>
</dbReference>
<dbReference type="RefSeq" id="WP_227035960.1">
    <property type="nucleotide sequence ID" value="NZ_CP113781.1"/>
</dbReference>
<dbReference type="SMR" id="P19412"/>
<dbReference type="SwissLipids" id="SLP:000001347"/>
<dbReference type="KEGG" id="ag:AAC45413"/>
<dbReference type="BioCyc" id="MetaCyc:BAIEEUBSP-MONOMER"/>
<dbReference type="BRENDA" id="4.2.1.106">
    <property type="organism ID" value="1513"/>
</dbReference>
<dbReference type="SABIO-RK" id="P19412"/>
<dbReference type="UniPathway" id="UPA00221"/>
<dbReference type="GO" id="GO:0005737">
    <property type="term" value="C:cytoplasm"/>
    <property type="evidence" value="ECO:0000305"/>
    <property type="project" value="UniProt"/>
</dbReference>
<dbReference type="GO" id="GO:0033988">
    <property type="term" value="F:bile-acid 7alpha-dehydratase activity"/>
    <property type="evidence" value="ECO:0000314"/>
    <property type="project" value="UniProt"/>
</dbReference>
<dbReference type="GO" id="GO:0006699">
    <property type="term" value="P:bile acid biosynthetic process"/>
    <property type="evidence" value="ECO:0007669"/>
    <property type="project" value="UniProtKB-UniPathway"/>
</dbReference>
<dbReference type="GO" id="GO:0030573">
    <property type="term" value="P:bile acid catabolic process"/>
    <property type="evidence" value="ECO:0000314"/>
    <property type="project" value="UniProt"/>
</dbReference>
<dbReference type="GO" id="GO:0016042">
    <property type="term" value="P:lipid catabolic process"/>
    <property type="evidence" value="ECO:0007669"/>
    <property type="project" value="UniProtKB-KW"/>
</dbReference>
<dbReference type="Gene3D" id="3.10.450.50">
    <property type="match status" value="1"/>
</dbReference>
<dbReference type="InterPro" id="IPR032710">
    <property type="entry name" value="NTF2-like_dom_sf"/>
</dbReference>
<dbReference type="InterPro" id="IPR037401">
    <property type="entry name" value="SnoaL-like"/>
</dbReference>
<dbReference type="Pfam" id="PF13577">
    <property type="entry name" value="SnoaL_4"/>
    <property type="match status" value="1"/>
</dbReference>
<dbReference type="SUPFAM" id="SSF54427">
    <property type="entry name" value="NTF2-like"/>
    <property type="match status" value="1"/>
</dbReference>
<gene>
    <name evidence="3 4" type="primary">baiE</name>
</gene>
<proteinExistence type="evidence at protein level"/>
<keyword id="KW-0088">Bile acid catabolism</keyword>
<keyword id="KW-0903">Direct protein sequencing</keyword>
<keyword id="KW-0442">Lipid degradation</keyword>
<keyword id="KW-0443">Lipid metabolism</keyword>
<keyword id="KW-0456">Lyase</keyword>
<keyword id="KW-0753">Steroid metabolism</keyword>
<accession>P19412</accession>
<name>BAIE_CLOSV</name>
<protein>
    <recommendedName>
        <fullName evidence="4">Bile acid 7alpha-dehydratase</fullName>
        <shortName evidence="4">BA7alphaD</shortName>
        <ecNumber evidence="2">4.2.1.106</ecNumber>
    </recommendedName>
    <alternativeName>
        <fullName>Bile acid-inducible operon protein E</fullName>
    </alternativeName>
    <alternativeName>
        <fullName evidence="4">C24 bile acid 7alpha-dehydratase</fullName>
    </alternativeName>
</protein>